<feature type="chain" id="PRO_0000171302" description="tRNA (guanine-N(7)-)-methyltransferase">
    <location>
        <begin position="1"/>
        <end position="254"/>
    </location>
</feature>
<feature type="region of interest" description="Disordered" evidence="3">
    <location>
        <begin position="1"/>
        <end position="34"/>
    </location>
</feature>
<feature type="active site" evidence="1">
    <location>
        <position position="162"/>
    </location>
</feature>
<feature type="binding site" evidence="2">
    <location>
        <position position="87"/>
    </location>
    <ligand>
        <name>S-adenosyl-L-methionine</name>
        <dbReference type="ChEBI" id="CHEBI:59789"/>
    </ligand>
</feature>
<feature type="binding site" evidence="2">
    <location>
        <position position="112"/>
    </location>
    <ligand>
        <name>S-adenosyl-L-methionine</name>
        <dbReference type="ChEBI" id="CHEBI:59789"/>
    </ligand>
</feature>
<feature type="binding site" evidence="2">
    <location>
        <position position="139"/>
    </location>
    <ligand>
        <name>S-adenosyl-L-methionine</name>
        <dbReference type="ChEBI" id="CHEBI:59789"/>
    </ligand>
</feature>
<feature type="binding site" evidence="2">
    <location>
        <position position="162"/>
    </location>
    <ligand>
        <name>S-adenosyl-L-methionine</name>
        <dbReference type="ChEBI" id="CHEBI:59789"/>
    </ligand>
</feature>
<feature type="binding site" evidence="2">
    <location>
        <position position="166"/>
    </location>
    <ligand>
        <name>substrate</name>
    </ligand>
</feature>
<feature type="binding site" evidence="2">
    <location>
        <position position="198"/>
    </location>
    <ligand>
        <name>substrate</name>
    </ligand>
</feature>
<feature type="binding site" evidence="2">
    <location>
        <begin position="233"/>
        <end position="236"/>
    </location>
    <ligand>
        <name>substrate</name>
    </ligand>
</feature>
<sequence>MNTNTPAHPPEGAPLSEATQAALASAEHAPDSPGATHIRSFVHRRGHITQRQRDALEQLMGKWSVPYAPRPLDMAATFGRQAPTILEIGFGMGETTEKIALARPGDNFLGVEVFNAGVGSLLHRIEESAIANLRIVQHDAVEVVRDMIAPDSLAGVHVYFPDPWPKKRHHKRRLLQPPFVALLASRLAPGGYLHCATDWEDYAVQMLEVLGGEPLLRNTADGYAPRPDFRPQTKFETRGLRLGHGVWDLMFKRA</sequence>
<organism>
    <name type="scientific">Bordetella parapertussis (strain 12822 / ATCC BAA-587 / NCTC 13253)</name>
    <dbReference type="NCBI Taxonomy" id="257311"/>
    <lineage>
        <taxon>Bacteria</taxon>
        <taxon>Pseudomonadati</taxon>
        <taxon>Pseudomonadota</taxon>
        <taxon>Betaproteobacteria</taxon>
        <taxon>Burkholderiales</taxon>
        <taxon>Alcaligenaceae</taxon>
        <taxon>Bordetella</taxon>
    </lineage>
</organism>
<comment type="function">
    <text evidence="2">Catalyzes the formation of N(7)-methylguanine at position 46 (m7G46) in tRNA.</text>
</comment>
<comment type="catalytic activity">
    <reaction evidence="2">
        <text>guanosine(46) in tRNA + S-adenosyl-L-methionine = N(7)-methylguanosine(46) in tRNA + S-adenosyl-L-homocysteine</text>
        <dbReference type="Rhea" id="RHEA:42708"/>
        <dbReference type="Rhea" id="RHEA-COMP:10188"/>
        <dbReference type="Rhea" id="RHEA-COMP:10189"/>
        <dbReference type="ChEBI" id="CHEBI:57856"/>
        <dbReference type="ChEBI" id="CHEBI:59789"/>
        <dbReference type="ChEBI" id="CHEBI:74269"/>
        <dbReference type="ChEBI" id="CHEBI:74480"/>
        <dbReference type="EC" id="2.1.1.33"/>
    </reaction>
</comment>
<comment type="pathway">
    <text evidence="2">tRNA modification; N(7)-methylguanine-tRNA biosynthesis.</text>
</comment>
<comment type="similarity">
    <text evidence="2">Belongs to the class I-like SAM-binding methyltransferase superfamily. TrmB family.</text>
</comment>
<comment type="sequence caution" evidence="4">
    <conflict type="erroneous initiation">
        <sequence resource="EMBL-CDS" id="CAE36089"/>
    </conflict>
</comment>
<accession>Q7WC23</accession>
<dbReference type="EC" id="2.1.1.33" evidence="2"/>
<dbReference type="EMBL" id="BX640424">
    <property type="protein sequence ID" value="CAE36089.1"/>
    <property type="status" value="ALT_INIT"/>
    <property type="molecule type" value="Genomic_DNA"/>
</dbReference>
<dbReference type="RefSeq" id="WP_033446655.1">
    <property type="nucleotide sequence ID" value="NC_002928.3"/>
</dbReference>
<dbReference type="SMR" id="Q7WC23"/>
<dbReference type="GeneID" id="93202255"/>
<dbReference type="KEGG" id="bpa:BPP0505"/>
<dbReference type="HOGENOM" id="CLU_050910_0_1_4"/>
<dbReference type="UniPathway" id="UPA00989"/>
<dbReference type="Proteomes" id="UP000001421">
    <property type="component" value="Chromosome"/>
</dbReference>
<dbReference type="GO" id="GO:0043527">
    <property type="term" value="C:tRNA methyltransferase complex"/>
    <property type="evidence" value="ECO:0007669"/>
    <property type="project" value="TreeGrafter"/>
</dbReference>
<dbReference type="GO" id="GO:0008176">
    <property type="term" value="F:tRNA (guanine(46)-N7)-methyltransferase activity"/>
    <property type="evidence" value="ECO:0007669"/>
    <property type="project" value="UniProtKB-UniRule"/>
</dbReference>
<dbReference type="FunFam" id="3.40.50.150:FF:000035">
    <property type="entry name" value="tRNA (guanine-N(7)-)-methyltransferase"/>
    <property type="match status" value="1"/>
</dbReference>
<dbReference type="Gene3D" id="3.40.50.150">
    <property type="entry name" value="Vaccinia Virus protein VP39"/>
    <property type="match status" value="1"/>
</dbReference>
<dbReference type="HAMAP" id="MF_01057">
    <property type="entry name" value="tRNA_methyltr_TrmB"/>
    <property type="match status" value="1"/>
</dbReference>
<dbReference type="InterPro" id="IPR029063">
    <property type="entry name" value="SAM-dependent_MTases_sf"/>
</dbReference>
<dbReference type="InterPro" id="IPR003358">
    <property type="entry name" value="tRNA_(Gua-N-7)_MeTrfase_Trmb"/>
</dbReference>
<dbReference type="InterPro" id="IPR055361">
    <property type="entry name" value="tRNA_methyltr_TrmB_bact"/>
</dbReference>
<dbReference type="NCBIfam" id="TIGR00091">
    <property type="entry name" value="tRNA (guanosine(46)-N7)-methyltransferase TrmB"/>
    <property type="match status" value="1"/>
</dbReference>
<dbReference type="PANTHER" id="PTHR23417">
    <property type="entry name" value="3-DEOXY-D-MANNO-OCTULOSONIC-ACID TRANSFERASE/TRNA GUANINE-N 7 - -METHYLTRANSFERASE"/>
    <property type="match status" value="1"/>
</dbReference>
<dbReference type="PANTHER" id="PTHR23417:SF14">
    <property type="entry name" value="PENTACOTRIPEPTIDE-REPEAT REGION OF PRORP DOMAIN-CONTAINING PROTEIN"/>
    <property type="match status" value="1"/>
</dbReference>
<dbReference type="Pfam" id="PF02390">
    <property type="entry name" value="Methyltransf_4"/>
    <property type="match status" value="1"/>
</dbReference>
<dbReference type="SUPFAM" id="SSF53335">
    <property type="entry name" value="S-adenosyl-L-methionine-dependent methyltransferases"/>
    <property type="match status" value="1"/>
</dbReference>
<dbReference type="PROSITE" id="PS51625">
    <property type="entry name" value="SAM_MT_TRMB"/>
    <property type="match status" value="1"/>
</dbReference>
<reference key="1">
    <citation type="journal article" date="2003" name="Nat. Genet.">
        <title>Comparative analysis of the genome sequences of Bordetella pertussis, Bordetella parapertussis and Bordetella bronchiseptica.</title>
        <authorList>
            <person name="Parkhill J."/>
            <person name="Sebaihia M."/>
            <person name="Preston A."/>
            <person name="Murphy L.D."/>
            <person name="Thomson N.R."/>
            <person name="Harris D.E."/>
            <person name="Holden M.T.G."/>
            <person name="Churcher C.M."/>
            <person name="Bentley S.D."/>
            <person name="Mungall K.L."/>
            <person name="Cerdeno-Tarraga A.-M."/>
            <person name="Temple L."/>
            <person name="James K.D."/>
            <person name="Harris B."/>
            <person name="Quail M.A."/>
            <person name="Achtman M."/>
            <person name="Atkin R."/>
            <person name="Baker S."/>
            <person name="Basham D."/>
            <person name="Bason N."/>
            <person name="Cherevach I."/>
            <person name="Chillingworth T."/>
            <person name="Collins M."/>
            <person name="Cronin A."/>
            <person name="Davis P."/>
            <person name="Doggett J."/>
            <person name="Feltwell T."/>
            <person name="Goble A."/>
            <person name="Hamlin N."/>
            <person name="Hauser H."/>
            <person name="Holroyd S."/>
            <person name="Jagels K."/>
            <person name="Leather S."/>
            <person name="Moule S."/>
            <person name="Norberczak H."/>
            <person name="O'Neil S."/>
            <person name="Ormond D."/>
            <person name="Price C."/>
            <person name="Rabbinowitsch E."/>
            <person name="Rutter S."/>
            <person name="Sanders M."/>
            <person name="Saunders D."/>
            <person name="Seeger K."/>
            <person name="Sharp S."/>
            <person name="Simmonds M."/>
            <person name="Skelton J."/>
            <person name="Squares R."/>
            <person name="Squares S."/>
            <person name="Stevens K."/>
            <person name="Unwin L."/>
            <person name="Whitehead S."/>
            <person name="Barrell B.G."/>
            <person name="Maskell D.J."/>
        </authorList>
    </citation>
    <scope>NUCLEOTIDE SEQUENCE [LARGE SCALE GENOMIC DNA]</scope>
    <source>
        <strain>12822 / ATCC BAA-587 / NCTC 13253</strain>
    </source>
</reference>
<name>TRMB_BORPA</name>
<protein>
    <recommendedName>
        <fullName evidence="2">tRNA (guanine-N(7)-)-methyltransferase</fullName>
        <ecNumber evidence="2">2.1.1.33</ecNumber>
    </recommendedName>
    <alternativeName>
        <fullName evidence="2">tRNA (guanine(46)-N(7))-methyltransferase</fullName>
    </alternativeName>
    <alternativeName>
        <fullName evidence="2">tRNA(m7G46)-methyltransferase</fullName>
    </alternativeName>
</protein>
<evidence type="ECO:0000250" key="1"/>
<evidence type="ECO:0000255" key="2">
    <source>
        <dbReference type="HAMAP-Rule" id="MF_01057"/>
    </source>
</evidence>
<evidence type="ECO:0000256" key="3">
    <source>
        <dbReference type="SAM" id="MobiDB-lite"/>
    </source>
</evidence>
<evidence type="ECO:0000305" key="4"/>
<gene>
    <name evidence="2" type="primary">trmB</name>
    <name type="ordered locus">BPP0505</name>
</gene>
<proteinExistence type="inferred from homology"/>
<keyword id="KW-0489">Methyltransferase</keyword>
<keyword id="KW-0949">S-adenosyl-L-methionine</keyword>
<keyword id="KW-0808">Transferase</keyword>
<keyword id="KW-0819">tRNA processing</keyword>